<name>CSG_METFV</name>
<sequence>MRKFTLLMLLLIVISMSGIAGAAEVKNLNTSKTFTKIQEAIDDPSTTDGNIIIVGPGNYTENILVNKSLTLKSNGSAIINAVSSEKSTITIKANNVWIEGFIIIGGKNGIYMENVTGCTITNNTIQNAFVSGWEYYGGNGICLVNSTNNTITNNIIRNNTWNGINVCESKGNIIKNNTIMYSGGIGIYVWGFNKFEGNNIIENNRIINATYGGIYLFRPSNNKICRNYIANVSSGGGGMSGAICIDVSDYNIVKDNIGINCDGGLFTDGMIGNEITNNIFKNCKVAVSESTYGPASRNNKIYGNYFINYETAISDPKGELVDNIWNTTEGGNYWSNYTGNNTGDGTGNIPYYYDNKPLVVDLAIEDIAAKPSGIEVRVKNLGKADIKKIDPLTKLKIKISCDNDVYETFIDPLSAGESQIVRWDKIVPEGNHTIKAEIPYSAEGYLIGTNIRDADISNNVFSKIVQGFVQNKTFTITLTNLGKSTITIKYYISIYTNPVNGTKVSYRELTITLKPNETKTIELGKYPFKYAVSGTMIVKNPSRYRIPLNLRIKYEIEGLNPQMREISKYIAPRGEFRYIARYTGKEEGYADVW</sequence>
<protein>
    <recommendedName>
        <fullName>Cell surface glycoprotein</fullName>
    </recommendedName>
    <alternativeName>
        <fullName>S-layer protein</fullName>
    </alternativeName>
</protein>
<comment type="function">
    <text>The S-layer is a paracrystalline mono-layered assembly of proteins which coat the surface of the cell.</text>
</comment>
<comment type="subcellular location">
    <subcellularLocation>
        <location>Secreted</location>
        <location>Cell wall</location>
        <location>S-layer</location>
    </subcellularLocation>
    <text>This archaea is covered by an S-layer with hexagonal symmetry.</text>
</comment>
<comment type="PTM">
    <text evidence="3">N-glycosylated; contains glycans composed of methyl-Man, Man and GalNAc residues in a molar ratio of 2:3:1.</text>
</comment>
<dbReference type="EMBL" id="X58297">
    <property type="protein sequence ID" value="CAA41230.1"/>
    <property type="molecule type" value="Genomic_DNA"/>
</dbReference>
<dbReference type="EMBL" id="CP002278">
    <property type="protein sequence ID" value="ADP77028.1"/>
    <property type="molecule type" value="Genomic_DNA"/>
</dbReference>
<dbReference type="PIR" id="S16225">
    <property type="entry name" value="S16225"/>
</dbReference>
<dbReference type="SMR" id="P27373"/>
<dbReference type="GlyCosmos" id="P27373">
    <property type="glycosylation" value="19 sites, No reported glycans"/>
</dbReference>
<dbReference type="iPTMnet" id="P27373"/>
<dbReference type="KEGG" id="mfv:Mfer_0225"/>
<dbReference type="HOGENOM" id="CLU_459779_0_0_2"/>
<dbReference type="OrthoDB" id="71602at2157"/>
<dbReference type="Proteomes" id="UP000002315">
    <property type="component" value="Chromosome"/>
</dbReference>
<dbReference type="GO" id="GO:0005576">
    <property type="term" value="C:extracellular region"/>
    <property type="evidence" value="ECO:0007669"/>
    <property type="project" value="UniProtKB-KW"/>
</dbReference>
<dbReference type="GO" id="GO:0030115">
    <property type="term" value="C:S-layer"/>
    <property type="evidence" value="ECO:0007669"/>
    <property type="project" value="UniProtKB-SubCell"/>
</dbReference>
<dbReference type="GO" id="GO:0071555">
    <property type="term" value="P:cell wall organization"/>
    <property type="evidence" value="ECO:0007669"/>
    <property type="project" value="UniProtKB-KW"/>
</dbReference>
<dbReference type="Gene3D" id="2.160.20.10">
    <property type="entry name" value="Single-stranded right-handed beta-helix, Pectin lyase-like"/>
    <property type="match status" value="1"/>
</dbReference>
<dbReference type="InterPro" id="IPR006633">
    <property type="entry name" value="Carb-bd_sugar_hydrolysis-dom"/>
</dbReference>
<dbReference type="InterPro" id="IPR007742">
    <property type="entry name" value="NosD_dom"/>
</dbReference>
<dbReference type="InterPro" id="IPR022441">
    <property type="entry name" value="Para_beta_helix_rpt-2"/>
</dbReference>
<dbReference type="InterPro" id="IPR006626">
    <property type="entry name" value="PbH1"/>
</dbReference>
<dbReference type="InterPro" id="IPR012334">
    <property type="entry name" value="Pectin_lyas_fold"/>
</dbReference>
<dbReference type="InterPro" id="IPR011050">
    <property type="entry name" value="Pectin_lyase_fold/virulence"/>
</dbReference>
<dbReference type="NCBIfam" id="TIGR03804">
    <property type="entry name" value="para_beta_helix"/>
    <property type="match status" value="1"/>
</dbReference>
<dbReference type="Pfam" id="PF05048">
    <property type="entry name" value="NosD"/>
    <property type="match status" value="1"/>
</dbReference>
<dbReference type="SMART" id="SM00722">
    <property type="entry name" value="CASH"/>
    <property type="match status" value="2"/>
</dbReference>
<dbReference type="SMART" id="SM00710">
    <property type="entry name" value="PbH1"/>
    <property type="match status" value="8"/>
</dbReference>
<dbReference type="SUPFAM" id="SSF51126">
    <property type="entry name" value="Pectin lyase-like"/>
    <property type="match status" value="1"/>
</dbReference>
<feature type="signal peptide" evidence="2">
    <location>
        <begin position="1"/>
        <end position="22"/>
    </location>
</feature>
<feature type="chain" id="PRO_0000032618" description="Cell surface glycoprotein">
    <location>
        <begin position="23"/>
        <end position="593"/>
    </location>
</feature>
<feature type="glycosylation site" description="N-linked (GalNAc...) asparagine" evidence="3">
    <location>
        <position position="29"/>
    </location>
</feature>
<feature type="glycosylation site" description="N-linked (GalNAc...) asparagine" evidence="1">
    <location>
        <position position="58"/>
    </location>
</feature>
<feature type="glycosylation site" description="N-linked (GalNAc...) asparagine" evidence="1">
    <location>
        <position position="66"/>
    </location>
</feature>
<feature type="glycosylation site" description="N-linked (GalNAc...) asparagine" evidence="1">
    <location>
        <position position="74"/>
    </location>
</feature>
<feature type="glycosylation site" description="N-linked (GalNAc...) asparagine" evidence="1">
    <location>
        <position position="114"/>
    </location>
</feature>
<feature type="glycosylation site" description="N-linked (GalNAc...) asparagine" evidence="1">
    <location>
        <position position="122"/>
    </location>
</feature>
<feature type="glycosylation site" description="N-linked (GalNAc...) asparagine" evidence="1">
    <location>
        <position position="145"/>
    </location>
</feature>
<feature type="glycosylation site" description="N-linked (GalNAc...) asparagine" evidence="1">
    <location>
        <position position="148"/>
    </location>
</feature>
<feature type="glycosylation site" description="N-linked (GalNAc...) asparagine" evidence="1">
    <location>
        <position position="158"/>
    </location>
</feature>
<feature type="glycosylation site" description="N-linked (GalNAc...) asparagine" evidence="1">
    <location>
        <position position="176"/>
    </location>
</feature>
<feature type="glycosylation site" description="N-linked (GalNAc...) asparagine" evidence="1">
    <location>
        <position position="208"/>
    </location>
</feature>
<feature type="glycosylation site" description="N-linked (GalNAc...) asparagine" evidence="1">
    <location>
        <position position="231"/>
    </location>
</feature>
<feature type="glycosylation site" description="N-linked (GalNAc...) asparagine" evidence="1">
    <location>
        <position position="326"/>
    </location>
</feature>
<feature type="glycosylation site" description="N-linked (GalNAc...) asparagine" evidence="1">
    <location>
        <position position="336"/>
    </location>
</feature>
<feature type="glycosylation site" description="N-linked (GalNAc...) asparagine" evidence="1">
    <location>
        <position position="340"/>
    </location>
</feature>
<feature type="glycosylation site" description="N-linked (GalNAc...) asparagine" evidence="1">
    <location>
        <position position="431"/>
    </location>
</feature>
<feature type="glycosylation site" description="N-linked (GalNAc...) asparagine" evidence="1">
    <location>
        <position position="471"/>
    </location>
</feature>
<feature type="glycosylation site" description="N-linked (GalNAc...) asparagine" evidence="1">
    <location>
        <position position="500"/>
    </location>
</feature>
<feature type="glycosylation site" description="N-linked (GalNAc...) asparagine" evidence="1">
    <location>
        <position position="516"/>
    </location>
</feature>
<organism>
    <name type="scientific">Methanothermus fervidus (strain ATCC 43054 / DSM 2088 / JCM 10308 / V24 S)</name>
    <dbReference type="NCBI Taxonomy" id="523846"/>
    <lineage>
        <taxon>Archaea</taxon>
        <taxon>Methanobacteriati</taxon>
        <taxon>Methanobacteriota</taxon>
        <taxon>Methanomada group</taxon>
        <taxon>Methanobacteria</taxon>
        <taxon>Methanobacteriales</taxon>
        <taxon>Methanothermaceae</taxon>
        <taxon>Methanothermus</taxon>
    </lineage>
</organism>
<keyword id="KW-0134">Cell wall</keyword>
<keyword id="KW-0961">Cell wall biogenesis/degradation</keyword>
<keyword id="KW-0903">Direct protein sequencing</keyword>
<keyword id="KW-0325">Glycoprotein</keyword>
<keyword id="KW-1185">Reference proteome</keyword>
<keyword id="KW-0701">S-layer</keyword>
<keyword id="KW-0964">Secreted</keyword>
<keyword id="KW-0732">Signal</keyword>
<reference key="1">
    <citation type="journal article" date="1991" name="Eur. J. Biochem.">
        <title>Analysis and nucleotide sequence of the genes encoding the surface-layer glycoproteins of the hyperthermophilic methanogens Methanothermus fervidus and Methanothermus sociabilis.</title>
        <authorList>
            <person name="Broeckl G."/>
            <person name="Behr M."/>
            <person name="Fabry S."/>
            <person name="Hensel R."/>
            <person name="Kaudewitz H."/>
            <person name="Biendl E."/>
            <person name="Koenig H."/>
        </authorList>
    </citation>
    <scope>NUCLEOTIDE SEQUENCE [GENOMIC DNA]</scope>
    <scope>PROTEIN SEQUENCE OF 23-42</scope>
    <source>
        <strain>ATCC 43054 / DSM 2088 / JCM 10308 / V24 S</strain>
    </source>
</reference>
<reference key="2">
    <citation type="journal article" date="2010" name="Stand. Genomic Sci.">
        <title>Complete genome sequence of Methanothermus fervidus type strain (V24S).</title>
        <authorList>
            <person name="Anderson I."/>
            <person name="Djao O.D."/>
            <person name="Misra M."/>
            <person name="Chertkov O."/>
            <person name="Nolan M."/>
            <person name="Lucas S."/>
            <person name="Lapidus A."/>
            <person name="Del Rio T.G."/>
            <person name="Tice H."/>
            <person name="Cheng J.F."/>
            <person name="Tapia R."/>
            <person name="Han C."/>
            <person name="Goodwin L."/>
            <person name="Pitluck S."/>
            <person name="Liolios K."/>
            <person name="Ivanova N."/>
            <person name="Mavromatis K."/>
            <person name="Mikhailova N."/>
            <person name="Pati A."/>
            <person name="Brambilla E."/>
            <person name="Chen A."/>
            <person name="Palaniappan K."/>
            <person name="Land M."/>
            <person name="Hauser L."/>
            <person name="Chang Y.J."/>
            <person name="Jeffries C.D."/>
            <person name="Sikorski J."/>
            <person name="Spring S."/>
            <person name="Rohde M."/>
            <person name="Eichinger K."/>
            <person name="Huber H."/>
            <person name="Wirth R."/>
            <person name="Goker M."/>
            <person name="Detter J.C."/>
            <person name="Woyke T."/>
            <person name="Bristow J."/>
            <person name="Eisen J.A."/>
            <person name="Markowitz V."/>
            <person name="Hugenholtz P."/>
            <person name="Klenk H.P."/>
            <person name="Kyrpides N.C."/>
        </authorList>
    </citation>
    <scope>NUCLEOTIDE SEQUENCE [LARGE SCALE GENOMIC DNA]</scope>
    <source>
        <strain>ATCC 43054 / DSM 2088 / JCM 10308 / V24 S</strain>
    </source>
</reference>
<reference key="3">
    <citation type="journal article" date="1993" name="J. Biol. Chem.">
        <title>Primary structure of the heterosaccharide of the surface glycoprotein of Methanothermus fervidus.</title>
        <authorList>
            <person name="Karcher U."/>
            <person name="Schroder H."/>
            <person name="Haslinger E."/>
            <person name="Allmaier G."/>
            <person name="Schreiner R."/>
            <person name="Wieland F."/>
            <person name="Haselbeck A."/>
            <person name="Konig H."/>
        </authorList>
    </citation>
    <scope>GLYCOSYLATION</scope>
    <source>
        <strain>ATCC 43054 / DSM 2088 / JCM 10308 / V24 S</strain>
    </source>
</reference>
<accession>P27373</accession>
<accession>E3GXJ6</accession>
<proteinExistence type="evidence at protein level"/>
<gene>
    <name type="primary">slgA</name>
    <name type="ordered locus">Mfer_0225</name>
</gene>
<evidence type="ECO:0000255" key="1"/>
<evidence type="ECO:0000269" key="2">
    <source>
    </source>
</evidence>
<evidence type="ECO:0000269" key="3">
    <source>
    </source>
</evidence>